<gene>
    <name evidence="1" type="primary">rpmC</name>
    <name type="ordered locus">CGSHiEE_08135</name>
</gene>
<name>RL29_HAEIE</name>
<evidence type="ECO:0000255" key="1">
    <source>
        <dbReference type="HAMAP-Rule" id="MF_00374"/>
    </source>
</evidence>
<evidence type="ECO:0000305" key="2"/>
<reference key="1">
    <citation type="journal article" date="2007" name="Genome Biol.">
        <title>Characterization and modeling of the Haemophilus influenzae core and supragenomes based on the complete genomic sequences of Rd and 12 clinical nontypeable strains.</title>
        <authorList>
            <person name="Hogg J.S."/>
            <person name="Hu F.Z."/>
            <person name="Janto B."/>
            <person name="Boissy R."/>
            <person name="Hayes J."/>
            <person name="Keefe R."/>
            <person name="Post J.C."/>
            <person name="Ehrlich G.D."/>
        </authorList>
    </citation>
    <scope>NUCLEOTIDE SEQUENCE [LARGE SCALE GENOMIC DNA]</scope>
    <source>
        <strain>PittEE</strain>
    </source>
</reference>
<organism>
    <name type="scientific">Haemophilus influenzae (strain PittEE)</name>
    <dbReference type="NCBI Taxonomy" id="374930"/>
    <lineage>
        <taxon>Bacteria</taxon>
        <taxon>Pseudomonadati</taxon>
        <taxon>Pseudomonadota</taxon>
        <taxon>Gammaproteobacteria</taxon>
        <taxon>Pasteurellales</taxon>
        <taxon>Pasteurellaceae</taxon>
        <taxon>Haemophilus</taxon>
    </lineage>
</organism>
<keyword id="KW-0687">Ribonucleoprotein</keyword>
<keyword id="KW-0689">Ribosomal protein</keyword>
<sequence>MKAQDLRTKSVEELNAELVNLLGEQFKLRMQTATGQLQQTHQAKQVRRDIARVKTVLTEKAGE</sequence>
<proteinExistence type="inferred from homology"/>
<dbReference type="EMBL" id="CP000671">
    <property type="protein sequence ID" value="ABQ98940.1"/>
    <property type="molecule type" value="Genomic_DNA"/>
</dbReference>
<dbReference type="SMR" id="A5UDT9"/>
<dbReference type="KEGG" id="hip:CGSHiEE_08135"/>
<dbReference type="HOGENOM" id="CLU_158491_1_2_6"/>
<dbReference type="GO" id="GO:0022625">
    <property type="term" value="C:cytosolic large ribosomal subunit"/>
    <property type="evidence" value="ECO:0007669"/>
    <property type="project" value="TreeGrafter"/>
</dbReference>
<dbReference type="GO" id="GO:0003735">
    <property type="term" value="F:structural constituent of ribosome"/>
    <property type="evidence" value="ECO:0007669"/>
    <property type="project" value="InterPro"/>
</dbReference>
<dbReference type="GO" id="GO:0006412">
    <property type="term" value="P:translation"/>
    <property type="evidence" value="ECO:0007669"/>
    <property type="project" value="UniProtKB-UniRule"/>
</dbReference>
<dbReference type="CDD" id="cd00427">
    <property type="entry name" value="Ribosomal_L29_HIP"/>
    <property type="match status" value="1"/>
</dbReference>
<dbReference type="FunFam" id="1.10.287.310:FF:000001">
    <property type="entry name" value="50S ribosomal protein L29"/>
    <property type="match status" value="1"/>
</dbReference>
<dbReference type="Gene3D" id="1.10.287.310">
    <property type="match status" value="1"/>
</dbReference>
<dbReference type="HAMAP" id="MF_00374">
    <property type="entry name" value="Ribosomal_uL29"/>
    <property type="match status" value="1"/>
</dbReference>
<dbReference type="InterPro" id="IPR050063">
    <property type="entry name" value="Ribosomal_protein_uL29"/>
</dbReference>
<dbReference type="InterPro" id="IPR001854">
    <property type="entry name" value="Ribosomal_uL29"/>
</dbReference>
<dbReference type="InterPro" id="IPR018254">
    <property type="entry name" value="Ribosomal_uL29_CS"/>
</dbReference>
<dbReference type="InterPro" id="IPR036049">
    <property type="entry name" value="Ribosomal_uL29_sf"/>
</dbReference>
<dbReference type="NCBIfam" id="TIGR00012">
    <property type="entry name" value="L29"/>
    <property type="match status" value="1"/>
</dbReference>
<dbReference type="PANTHER" id="PTHR10916">
    <property type="entry name" value="60S RIBOSOMAL PROTEIN L35/50S RIBOSOMAL PROTEIN L29"/>
    <property type="match status" value="1"/>
</dbReference>
<dbReference type="PANTHER" id="PTHR10916:SF0">
    <property type="entry name" value="LARGE RIBOSOMAL SUBUNIT PROTEIN UL29C"/>
    <property type="match status" value="1"/>
</dbReference>
<dbReference type="Pfam" id="PF00831">
    <property type="entry name" value="Ribosomal_L29"/>
    <property type="match status" value="1"/>
</dbReference>
<dbReference type="SUPFAM" id="SSF46561">
    <property type="entry name" value="Ribosomal protein L29 (L29p)"/>
    <property type="match status" value="1"/>
</dbReference>
<dbReference type="PROSITE" id="PS00579">
    <property type="entry name" value="RIBOSOMAL_L29"/>
    <property type="match status" value="1"/>
</dbReference>
<protein>
    <recommendedName>
        <fullName evidence="1">Large ribosomal subunit protein uL29</fullName>
    </recommendedName>
    <alternativeName>
        <fullName evidence="2">50S ribosomal protein L29</fullName>
    </alternativeName>
</protein>
<accession>A5UDT9</accession>
<comment type="similarity">
    <text evidence="1">Belongs to the universal ribosomal protein uL29 family.</text>
</comment>
<feature type="chain" id="PRO_1000007492" description="Large ribosomal subunit protein uL29">
    <location>
        <begin position="1"/>
        <end position="63"/>
    </location>
</feature>